<protein>
    <recommendedName>
        <fullName evidence="1">UPF0235 protein APE_0182.1</fullName>
    </recommendedName>
</protein>
<organism>
    <name type="scientific">Aeropyrum pernix (strain ATCC 700893 / DSM 11879 / JCM 9820 / NBRC 100138 / K1)</name>
    <dbReference type="NCBI Taxonomy" id="272557"/>
    <lineage>
        <taxon>Archaea</taxon>
        <taxon>Thermoproteota</taxon>
        <taxon>Thermoprotei</taxon>
        <taxon>Desulfurococcales</taxon>
        <taxon>Desulfurococcaceae</taxon>
        <taxon>Aeropyrum</taxon>
    </lineage>
</organism>
<dbReference type="EMBL" id="BA000002">
    <property type="protein sequence ID" value="BAA79094.2"/>
    <property type="molecule type" value="Genomic_DNA"/>
</dbReference>
<dbReference type="PIR" id="D72774">
    <property type="entry name" value="D72774"/>
</dbReference>
<dbReference type="RefSeq" id="WP_010865552.1">
    <property type="nucleotide sequence ID" value="NC_000854.2"/>
</dbReference>
<dbReference type="SMR" id="Q9YFR7"/>
<dbReference type="STRING" id="272557.APE_0182.1"/>
<dbReference type="EnsemblBacteria" id="BAA79094">
    <property type="protein sequence ID" value="BAA79094"/>
    <property type="gene ID" value="APE_0182.1"/>
</dbReference>
<dbReference type="GeneID" id="1445710"/>
<dbReference type="KEGG" id="ape:APE_0182.1"/>
<dbReference type="eggNOG" id="arCOG04058">
    <property type="taxonomic scope" value="Archaea"/>
</dbReference>
<dbReference type="Proteomes" id="UP000002518">
    <property type="component" value="Chromosome"/>
</dbReference>
<dbReference type="GO" id="GO:0005737">
    <property type="term" value="C:cytoplasm"/>
    <property type="evidence" value="ECO:0007669"/>
    <property type="project" value="TreeGrafter"/>
</dbReference>
<dbReference type="Gene3D" id="3.30.1200.10">
    <property type="entry name" value="YggU-like"/>
    <property type="match status" value="1"/>
</dbReference>
<dbReference type="HAMAP" id="MF_00634">
    <property type="entry name" value="UPF0235"/>
    <property type="match status" value="1"/>
</dbReference>
<dbReference type="InterPro" id="IPR003746">
    <property type="entry name" value="DUF167"/>
</dbReference>
<dbReference type="InterPro" id="IPR036591">
    <property type="entry name" value="YggU-like_sf"/>
</dbReference>
<dbReference type="NCBIfam" id="TIGR00251">
    <property type="entry name" value="DUF167 family protein"/>
    <property type="match status" value="1"/>
</dbReference>
<dbReference type="PANTHER" id="PTHR13420">
    <property type="entry name" value="UPF0235 PROTEIN C15ORF40"/>
    <property type="match status" value="1"/>
</dbReference>
<dbReference type="PANTHER" id="PTHR13420:SF7">
    <property type="entry name" value="UPF0235 PROTEIN C15ORF40"/>
    <property type="match status" value="1"/>
</dbReference>
<dbReference type="Pfam" id="PF02594">
    <property type="entry name" value="DUF167"/>
    <property type="match status" value="1"/>
</dbReference>
<dbReference type="SMART" id="SM01152">
    <property type="entry name" value="DUF167"/>
    <property type="match status" value="1"/>
</dbReference>
<dbReference type="SUPFAM" id="SSF69786">
    <property type="entry name" value="YggU-like"/>
    <property type="match status" value="1"/>
</dbReference>
<comment type="similarity">
    <text evidence="1">Belongs to the UPF0235 family.</text>
</comment>
<proteinExistence type="inferred from homology"/>
<evidence type="ECO:0000255" key="1">
    <source>
        <dbReference type="HAMAP-Rule" id="MF_00634"/>
    </source>
</evidence>
<reference key="1">
    <citation type="journal article" date="1999" name="DNA Res.">
        <title>Complete genome sequence of an aerobic hyper-thermophilic crenarchaeon, Aeropyrum pernix K1.</title>
        <authorList>
            <person name="Kawarabayasi Y."/>
            <person name="Hino Y."/>
            <person name="Horikawa H."/>
            <person name="Yamazaki S."/>
            <person name="Haikawa Y."/>
            <person name="Jin-no K."/>
            <person name="Takahashi M."/>
            <person name="Sekine M."/>
            <person name="Baba S."/>
            <person name="Ankai A."/>
            <person name="Kosugi H."/>
            <person name="Hosoyama A."/>
            <person name="Fukui S."/>
            <person name="Nagai Y."/>
            <person name="Nishijima K."/>
            <person name="Nakazawa H."/>
            <person name="Takamiya M."/>
            <person name="Masuda S."/>
            <person name="Funahashi T."/>
            <person name="Tanaka T."/>
            <person name="Kudoh Y."/>
            <person name="Yamazaki J."/>
            <person name="Kushida N."/>
            <person name="Oguchi A."/>
            <person name="Aoki K."/>
            <person name="Kubota K."/>
            <person name="Nakamura Y."/>
            <person name="Nomura N."/>
            <person name="Sako Y."/>
            <person name="Kikuchi H."/>
        </authorList>
    </citation>
    <scope>NUCLEOTIDE SEQUENCE [LARGE SCALE GENOMIC DNA]</scope>
    <source>
        <strain>ATCC 700893 / DSM 11879 / JCM 9820 / NBRC 100138 / K1</strain>
    </source>
</reference>
<sequence length="108" mass="12174">MPVNVDRLKDAVEVLGNRVRIRVYVKPEGRERRLRLEEGELVFYTDEPPLEGRANASLINFLARGLKVSVKNIEIVHGARSRSKVVEIRDVADPDALLERLASIVDEG</sequence>
<name>Y182_AERPE</name>
<keyword id="KW-1185">Reference proteome</keyword>
<accession>Q9YFR7</accession>
<gene>
    <name type="ordered locus">APE_0182.1</name>
</gene>
<feature type="chain" id="PRO_0000139465" description="UPF0235 protein APE_0182.1">
    <location>
        <begin position="1"/>
        <end position="108"/>
    </location>
</feature>